<organism>
    <name type="scientific">Neisseria gonorrhoeae (strain ATCC 700825 / FA 1090)</name>
    <dbReference type="NCBI Taxonomy" id="242231"/>
    <lineage>
        <taxon>Bacteria</taxon>
        <taxon>Pseudomonadati</taxon>
        <taxon>Pseudomonadota</taxon>
        <taxon>Betaproteobacteria</taxon>
        <taxon>Neisseriales</taxon>
        <taxon>Neisseriaceae</taxon>
        <taxon>Neisseria</taxon>
    </lineage>
</organism>
<name>RL5_NEIG1</name>
<protein>
    <recommendedName>
        <fullName evidence="1">Large ribosomal subunit protein uL5</fullName>
    </recommendedName>
    <alternativeName>
        <fullName evidence="2">50S ribosomal protein L5</fullName>
    </alternativeName>
</protein>
<proteinExistence type="inferred from homology"/>
<sequence length="179" mass="20379">MARLREFYKETVVPELVKQFGYKSVMEVPRIEKITLNMGVGEAVADKKVMEHAVSDLERIAGQRPVVTVARKSIAGFKIRDNYPVGCKVTLRRDQMFEFLDRLITIALPRVRDFRGVSGKSFDGRGNYNMGVREQIIFPEIEYDKIDALRGLNITITTTAKTDEEAKALLSLFKFPFKG</sequence>
<gene>
    <name evidence="1" type="primary">rplE</name>
    <name type="ordered locus">NGO_1827</name>
</gene>
<keyword id="KW-1185">Reference proteome</keyword>
<keyword id="KW-0687">Ribonucleoprotein</keyword>
<keyword id="KW-0689">Ribosomal protein</keyword>
<keyword id="KW-0694">RNA-binding</keyword>
<keyword id="KW-0699">rRNA-binding</keyword>
<keyword id="KW-0820">tRNA-binding</keyword>
<dbReference type="EMBL" id="AE004969">
    <property type="protein sequence ID" value="AAW90448.1"/>
    <property type="molecule type" value="Genomic_DNA"/>
</dbReference>
<dbReference type="RefSeq" id="WP_003690070.1">
    <property type="nucleotide sequence ID" value="NC_002946.2"/>
</dbReference>
<dbReference type="RefSeq" id="YP_208860.1">
    <property type="nucleotide sequence ID" value="NC_002946.2"/>
</dbReference>
<dbReference type="SMR" id="Q5F5T9"/>
<dbReference type="STRING" id="242231.NGO_1827"/>
<dbReference type="GeneID" id="66754307"/>
<dbReference type="KEGG" id="ngo:NGO_1827"/>
<dbReference type="PATRIC" id="fig|242231.10.peg.2197"/>
<dbReference type="HOGENOM" id="CLU_061015_2_1_4"/>
<dbReference type="Proteomes" id="UP000000535">
    <property type="component" value="Chromosome"/>
</dbReference>
<dbReference type="GO" id="GO:1990904">
    <property type="term" value="C:ribonucleoprotein complex"/>
    <property type="evidence" value="ECO:0007669"/>
    <property type="project" value="UniProtKB-KW"/>
</dbReference>
<dbReference type="GO" id="GO:0005840">
    <property type="term" value="C:ribosome"/>
    <property type="evidence" value="ECO:0007669"/>
    <property type="project" value="UniProtKB-KW"/>
</dbReference>
<dbReference type="GO" id="GO:0019843">
    <property type="term" value="F:rRNA binding"/>
    <property type="evidence" value="ECO:0007669"/>
    <property type="project" value="UniProtKB-UniRule"/>
</dbReference>
<dbReference type="GO" id="GO:0003735">
    <property type="term" value="F:structural constituent of ribosome"/>
    <property type="evidence" value="ECO:0007669"/>
    <property type="project" value="InterPro"/>
</dbReference>
<dbReference type="GO" id="GO:0000049">
    <property type="term" value="F:tRNA binding"/>
    <property type="evidence" value="ECO:0007669"/>
    <property type="project" value="UniProtKB-UniRule"/>
</dbReference>
<dbReference type="GO" id="GO:0006412">
    <property type="term" value="P:translation"/>
    <property type="evidence" value="ECO:0007669"/>
    <property type="project" value="UniProtKB-UniRule"/>
</dbReference>
<dbReference type="FunFam" id="3.30.1440.10:FF:000001">
    <property type="entry name" value="50S ribosomal protein L5"/>
    <property type="match status" value="1"/>
</dbReference>
<dbReference type="Gene3D" id="3.30.1440.10">
    <property type="match status" value="1"/>
</dbReference>
<dbReference type="HAMAP" id="MF_01333_B">
    <property type="entry name" value="Ribosomal_uL5_B"/>
    <property type="match status" value="1"/>
</dbReference>
<dbReference type="InterPro" id="IPR002132">
    <property type="entry name" value="Ribosomal_uL5"/>
</dbReference>
<dbReference type="InterPro" id="IPR020930">
    <property type="entry name" value="Ribosomal_uL5_bac-type"/>
</dbReference>
<dbReference type="InterPro" id="IPR031309">
    <property type="entry name" value="Ribosomal_uL5_C"/>
</dbReference>
<dbReference type="InterPro" id="IPR020929">
    <property type="entry name" value="Ribosomal_uL5_CS"/>
</dbReference>
<dbReference type="InterPro" id="IPR022803">
    <property type="entry name" value="Ribosomal_uL5_dom_sf"/>
</dbReference>
<dbReference type="InterPro" id="IPR031310">
    <property type="entry name" value="Ribosomal_uL5_N"/>
</dbReference>
<dbReference type="NCBIfam" id="NF000585">
    <property type="entry name" value="PRK00010.1"/>
    <property type="match status" value="1"/>
</dbReference>
<dbReference type="PANTHER" id="PTHR11994">
    <property type="entry name" value="60S RIBOSOMAL PROTEIN L11-RELATED"/>
    <property type="match status" value="1"/>
</dbReference>
<dbReference type="Pfam" id="PF00281">
    <property type="entry name" value="Ribosomal_L5"/>
    <property type="match status" value="1"/>
</dbReference>
<dbReference type="Pfam" id="PF00673">
    <property type="entry name" value="Ribosomal_L5_C"/>
    <property type="match status" value="1"/>
</dbReference>
<dbReference type="PIRSF" id="PIRSF002161">
    <property type="entry name" value="Ribosomal_L5"/>
    <property type="match status" value="1"/>
</dbReference>
<dbReference type="SUPFAM" id="SSF55282">
    <property type="entry name" value="RL5-like"/>
    <property type="match status" value="1"/>
</dbReference>
<dbReference type="PROSITE" id="PS00358">
    <property type="entry name" value="RIBOSOMAL_L5"/>
    <property type="match status" value="1"/>
</dbReference>
<reference key="1">
    <citation type="submission" date="2003-03" db="EMBL/GenBank/DDBJ databases">
        <title>The complete genome sequence of Neisseria gonorrhoeae.</title>
        <authorList>
            <person name="Lewis L.A."/>
            <person name="Gillaspy A.F."/>
            <person name="McLaughlin R.E."/>
            <person name="Gipson M."/>
            <person name="Ducey T.F."/>
            <person name="Ownbey T."/>
            <person name="Hartman K."/>
            <person name="Nydick C."/>
            <person name="Carson M.B."/>
            <person name="Vaughn J."/>
            <person name="Thomson C."/>
            <person name="Song L."/>
            <person name="Lin S."/>
            <person name="Yuan X."/>
            <person name="Najar F."/>
            <person name="Zhan M."/>
            <person name="Ren Q."/>
            <person name="Zhu H."/>
            <person name="Qi S."/>
            <person name="Kenton S.M."/>
            <person name="Lai H."/>
            <person name="White J.D."/>
            <person name="Clifton S."/>
            <person name="Roe B.A."/>
            <person name="Dyer D.W."/>
        </authorList>
    </citation>
    <scope>NUCLEOTIDE SEQUENCE [LARGE SCALE GENOMIC DNA]</scope>
    <source>
        <strain>ATCC 700825 / FA 1090</strain>
    </source>
</reference>
<feature type="chain" id="PRO_0000243027" description="Large ribosomal subunit protein uL5">
    <location>
        <begin position="1"/>
        <end position="179"/>
    </location>
</feature>
<accession>Q5F5T9</accession>
<evidence type="ECO:0000255" key="1">
    <source>
        <dbReference type="HAMAP-Rule" id="MF_01333"/>
    </source>
</evidence>
<evidence type="ECO:0000305" key="2"/>
<comment type="function">
    <text evidence="1">This is one of the proteins that bind and probably mediate the attachment of the 5S RNA into the large ribosomal subunit, where it forms part of the central protuberance. In the 70S ribosome it contacts protein S13 of the 30S subunit (bridge B1b), connecting the 2 subunits; this bridge is implicated in subunit movement. Contacts the P site tRNA; the 5S rRNA and some of its associated proteins might help stabilize positioning of ribosome-bound tRNAs.</text>
</comment>
<comment type="subunit">
    <text evidence="1">Part of the 50S ribosomal subunit; part of the 5S rRNA/L5/L18/L25 subcomplex. Contacts the 5S rRNA and the P site tRNA. Forms a bridge to the 30S subunit in the 70S ribosome.</text>
</comment>
<comment type="similarity">
    <text evidence="1">Belongs to the universal ribosomal protein uL5 family.</text>
</comment>